<organism>
    <name type="scientific">Streptococcus agalactiae serotype V (strain ATCC BAA-611 / 2603 V/R)</name>
    <dbReference type="NCBI Taxonomy" id="208435"/>
    <lineage>
        <taxon>Bacteria</taxon>
        <taxon>Bacillati</taxon>
        <taxon>Bacillota</taxon>
        <taxon>Bacilli</taxon>
        <taxon>Lactobacillales</taxon>
        <taxon>Streptococcaceae</taxon>
        <taxon>Streptococcus</taxon>
    </lineage>
</organism>
<keyword id="KW-0963">Cytoplasm</keyword>
<keyword id="KW-0238">DNA-binding</keyword>
<keyword id="KW-0520">NAD</keyword>
<keyword id="KW-1185">Reference proteome</keyword>
<keyword id="KW-0678">Repressor</keyword>
<keyword id="KW-0804">Transcription</keyword>
<keyword id="KW-0805">Transcription regulation</keyword>
<gene>
    <name evidence="1" type="primary">rex</name>
    <name type="ordered locus">SAG1100</name>
</gene>
<feature type="chain" id="PRO_0000097914" description="Redox-sensing transcriptional repressor Rex">
    <location>
        <begin position="1"/>
        <end position="210"/>
    </location>
</feature>
<feature type="DNA-binding region" description="H-T-H motif" evidence="1">
    <location>
        <begin position="15"/>
        <end position="54"/>
    </location>
</feature>
<feature type="binding site" evidence="1">
    <location>
        <begin position="89"/>
        <end position="94"/>
    </location>
    <ligand>
        <name>NAD(+)</name>
        <dbReference type="ChEBI" id="CHEBI:57540"/>
    </ligand>
</feature>
<name>REX_STRA5</name>
<sequence>MDKSIPKATAKRLSLYYRIFKRFNTDGIEKASSKQIADALGIDSATVRRDFSYFGELGRRGFGYDVKKLMNFFAEILNDHSTTNVMLVGCGNIGRALLHYRFHDRNKMQISMAFDLDSNDLVGKTTEDGIPVYGISTINDHLIDSDIETAILTVPSTEAQEVADILVKAGIKGILSFSPVHLTLPKDIIVQYVDLTSELQTLLYFMNQQQ</sequence>
<reference key="1">
    <citation type="journal article" date="2002" name="Proc. Natl. Acad. Sci. U.S.A.">
        <title>Complete genome sequence and comparative genomic analysis of an emerging human pathogen, serotype V Streptococcus agalactiae.</title>
        <authorList>
            <person name="Tettelin H."/>
            <person name="Masignani V."/>
            <person name="Cieslewicz M.J."/>
            <person name="Eisen J.A."/>
            <person name="Peterson S.N."/>
            <person name="Wessels M.R."/>
            <person name="Paulsen I.T."/>
            <person name="Nelson K.E."/>
            <person name="Margarit I."/>
            <person name="Read T.D."/>
            <person name="Madoff L.C."/>
            <person name="Wolf A.M."/>
            <person name="Beanan M.J."/>
            <person name="Brinkac L.M."/>
            <person name="Daugherty S.C."/>
            <person name="DeBoy R.T."/>
            <person name="Durkin A.S."/>
            <person name="Kolonay J.F."/>
            <person name="Madupu R."/>
            <person name="Lewis M.R."/>
            <person name="Radune D."/>
            <person name="Fedorova N.B."/>
            <person name="Scanlan D."/>
            <person name="Khouri H.M."/>
            <person name="Mulligan S."/>
            <person name="Carty H.A."/>
            <person name="Cline R.T."/>
            <person name="Van Aken S.E."/>
            <person name="Gill J."/>
            <person name="Scarselli M."/>
            <person name="Mora M."/>
            <person name="Iacobini E.T."/>
            <person name="Brettoni C."/>
            <person name="Galli G."/>
            <person name="Mariani M."/>
            <person name="Vegni F."/>
            <person name="Maione D."/>
            <person name="Rinaudo D."/>
            <person name="Rappuoli R."/>
            <person name="Telford J.L."/>
            <person name="Kasper D.L."/>
            <person name="Grandi G."/>
            <person name="Fraser C.M."/>
        </authorList>
    </citation>
    <scope>NUCLEOTIDE SEQUENCE [LARGE SCALE GENOMIC DNA]</scope>
    <source>
        <strain>ATCC BAA-611 / 2603 V/R</strain>
    </source>
</reference>
<accession>Q8DZK1</accession>
<dbReference type="EMBL" id="AE009948">
    <property type="protein sequence ID" value="AAM99981.1"/>
    <property type="molecule type" value="Genomic_DNA"/>
</dbReference>
<dbReference type="RefSeq" id="NP_688109.1">
    <property type="nucleotide sequence ID" value="NC_004116.1"/>
</dbReference>
<dbReference type="SMR" id="Q8DZK1"/>
<dbReference type="STRING" id="208435.SAG1100"/>
<dbReference type="KEGG" id="sag:SAG1100"/>
<dbReference type="PATRIC" id="fig|208435.3.peg.1108"/>
<dbReference type="HOGENOM" id="CLU_061534_1_1_9"/>
<dbReference type="OrthoDB" id="9784760at2"/>
<dbReference type="Proteomes" id="UP000000821">
    <property type="component" value="Chromosome"/>
</dbReference>
<dbReference type="GO" id="GO:0005737">
    <property type="term" value="C:cytoplasm"/>
    <property type="evidence" value="ECO:0007669"/>
    <property type="project" value="UniProtKB-SubCell"/>
</dbReference>
<dbReference type="GO" id="GO:0003677">
    <property type="term" value="F:DNA binding"/>
    <property type="evidence" value="ECO:0007669"/>
    <property type="project" value="UniProtKB-UniRule"/>
</dbReference>
<dbReference type="GO" id="GO:0003700">
    <property type="term" value="F:DNA-binding transcription factor activity"/>
    <property type="evidence" value="ECO:0007669"/>
    <property type="project" value="UniProtKB-UniRule"/>
</dbReference>
<dbReference type="GO" id="GO:0045892">
    <property type="term" value="P:negative regulation of DNA-templated transcription"/>
    <property type="evidence" value="ECO:0007669"/>
    <property type="project" value="InterPro"/>
</dbReference>
<dbReference type="GO" id="GO:0051775">
    <property type="term" value="P:response to redox state"/>
    <property type="evidence" value="ECO:0007669"/>
    <property type="project" value="InterPro"/>
</dbReference>
<dbReference type="Gene3D" id="3.40.50.720">
    <property type="entry name" value="NAD(P)-binding Rossmann-like Domain"/>
    <property type="match status" value="1"/>
</dbReference>
<dbReference type="Gene3D" id="1.10.10.10">
    <property type="entry name" value="Winged helix-like DNA-binding domain superfamily/Winged helix DNA-binding domain"/>
    <property type="match status" value="1"/>
</dbReference>
<dbReference type="HAMAP" id="MF_01131">
    <property type="entry name" value="Rex"/>
    <property type="match status" value="1"/>
</dbReference>
<dbReference type="InterPro" id="IPR003781">
    <property type="entry name" value="CoA-bd"/>
</dbReference>
<dbReference type="InterPro" id="IPR036291">
    <property type="entry name" value="NAD(P)-bd_dom_sf"/>
</dbReference>
<dbReference type="InterPro" id="IPR009718">
    <property type="entry name" value="Rex_DNA-bd_C_dom"/>
</dbReference>
<dbReference type="InterPro" id="IPR022876">
    <property type="entry name" value="Tscrpt_rep_Rex"/>
</dbReference>
<dbReference type="InterPro" id="IPR036388">
    <property type="entry name" value="WH-like_DNA-bd_sf"/>
</dbReference>
<dbReference type="InterPro" id="IPR036390">
    <property type="entry name" value="WH_DNA-bd_sf"/>
</dbReference>
<dbReference type="NCBIfam" id="NF003988">
    <property type="entry name" value="PRK05472.1-1"/>
    <property type="match status" value="1"/>
</dbReference>
<dbReference type="NCBIfam" id="NF003989">
    <property type="entry name" value="PRK05472.1-3"/>
    <property type="match status" value="1"/>
</dbReference>
<dbReference type="NCBIfam" id="NF003991">
    <property type="entry name" value="PRK05472.1-5"/>
    <property type="match status" value="1"/>
</dbReference>
<dbReference type="NCBIfam" id="NF003994">
    <property type="entry name" value="PRK05472.2-3"/>
    <property type="match status" value="1"/>
</dbReference>
<dbReference type="NCBIfam" id="NF003995">
    <property type="entry name" value="PRK05472.2-4"/>
    <property type="match status" value="1"/>
</dbReference>
<dbReference type="NCBIfam" id="NF003996">
    <property type="entry name" value="PRK05472.2-5"/>
    <property type="match status" value="1"/>
</dbReference>
<dbReference type="PANTHER" id="PTHR35786">
    <property type="entry name" value="REDOX-SENSING TRANSCRIPTIONAL REPRESSOR REX"/>
    <property type="match status" value="1"/>
</dbReference>
<dbReference type="PANTHER" id="PTHR35786:SF1">
    <property type="entry name" value="REDOX-SENSING TRANSCRIPTIONAL REPRESSOR REX 1"/>
    <property type="match status" value="1"/>
</dbReference>
<dbReference type="Pfam" id="PF02629">
    <property type="entry name" value="CoA_binding"/>
    <property type="match status" value="1"/>
</dbReference>
<dbReference type="Pfam" id="PF06971">
    <property type="entry name" value="Put_DNA-bind_N"/>
    <property type="match status" value="1"/>
</dbReference>
<dbReference type="SMART" id="SM00881">
    <property type="entry name" value="CoA_binding"/>
    <property type="match status" value="1"/>
</dbReference>
<dbReference type="SUPFAM" id="SSF51735">
    <property type="entry name" value="NAD(P)-binding Rossmann-fold domains"/>
    <property type="match status" value="1"/>
</dbReference>
<dbReference type="SUPFAM" id="SSF46785">
    <property type="entry name" value="Winged helix' DNA-binding domain"/>
    <property type="match status" value="1"/>
</dbReference>
<protein>
    <recommendedName>
        <fullName evidence="1">Redox-sensing transcriptional repressor Rex</fullName>
    </recommendedName>
</protein>
<evidence type="ECO:0000255" key="1">
    <source>
        <dbReference type="HAMAP-Rule" id="MF_01131"/>
    </source>
</evidence>
<comment type="function">
    <text evidence="1">Modulates transcription in response to changes in cellular NADH/NAD(+) redox state.</text>
</comment>
<comment type="subunit">
    <text evidence="1">Homodimer.</text>
</comment>
<comment type="subcellular location">
    <subcellularLocation>
        <location evidence="1">Cytoplasm</location>
    </subcellularLocation>
</comment>
<comment type="similarity">
    <text evidence="1">Belongs to the transcriptional regulatory Rex family.</text>
</comment>
<proteinExistence type="inferred from homology"/>